<gene>
    <name evidence="1" type="primary">acsA</name>
    <name type="synonym">acs</name>
    <name type="ordered locus">XAC4179</name>
</gene>
<protein>
    <recommendedName>
        <fullName evidence="1">Acetyl-coenzyme A synthetase</fullName>
        <shortName evidence="1">AcCoA synthetase</shortName>
        <shortName evidence="1">Acs</shortName>
        <ecNumber evidence="1">6.2.1.1</ecNumber>
    </recommendedName>
    <alternativeName>
        <fullName evidence="1">Acetate--CoA ligase</fullName>
    </alternativeName>
    <alternativeName>
        <fullName evidence="1">Acyl-activating enzyme</fullName>
    </alternativeName>
</protein>
<sequence>MADVYPVDPAFAADARVTREQYAALYRESIQHPEQFWGKAAQRLEWFKQPTQIKDVSYALDDFHIRWFGDGELNASVNCLDRQLATRGDKTALLFEPDSPDAASYPVTYRELYERVCKLGNALRNLGVKKGDRVTIYLPMIVDAAVAMLACARIGAVHSVVFGGFAANSIADRVIDCQSKLIITADEGLRGGKKIPLKANVDAALKIPGTNTVETVLVVRHTGGAVEMQAPRDRWFHDVVDGQPAACEPERMNAEDPLFILYTSGSTGKPKGVLHTTAGYLLFASYTHEVVFDLREDDIYWCTADVGWVTGHSYIVYGPLANGATAVMFEGVPNYPNVSRFWEVIDKHQVTIFYTAPTAIRALMRDGADPVKKTSRKSLRLLGSVGEPINPEAWRWYYEVVGDSRCPIVDTWWQTETGGILISPLAGAVDLKPGSATLPFFGVQPALVDAEGKILEGATEGNLVLLDSWPGQMRSVYGDHQRFIDTYFRTYPGSYFTGDGCRRDADGYYWITGRVDDVINVSGHRIGTAEVESALVSHPKVAEAAVVGFPHDVKGQGIYAYVTLIAGQTPSEDLHKELVSWVRKEIGPIASPDHLQWAPGLPKTRSGKIMRRILRKIAENAPDQLGDTSTLADPSVVDSLVNERLAR</sequence>
<name>ACSA_XANAC</name>
<organism>
    <name type="scientific">Xanthomonas axonopodis pv. citri (strain 306)</name>
    <dbReference type="NCBI Taxonomy" id="190486"/>
    <lineage>
        <taxon>Bacteria</taxon>
        <taxon>Pseudomonadati</taxon>
        <taxon>Pseudomonadota</taxon>
        <taxon>Gammaproteobacteria</taxon>
        <taxon>Lysobacterales</taxon>
        <taxon>Lysobacteraceae</taxon>
        <taxon>Xanthomonas</taxon>
    </lineage>
</organism>
<accession>Q8PF09</accession>
<evidence type="ECO:0000255" key="1">
    <source>
        <dbReference type="HAMAP-Rule" id="MF_01123"/>
    </source>
</evidence>
<dbReference type="EC" id="6.2.1.1" evidence="1"/>
<dbReference type="EMBL" id="AE008923">
    <property type="protein sequence ID" value="AAM39014.1"/>
    <property type="molecule type" value="Genomic_DNA"/>
</dbReference>
<dbReference type="RefSeq" id="WP_011052789.1">
    <property type="nucleotide sequence ID" value="NC_003919.1"/>
</dbReference>
<dbReference type="SMR" id="Q8PF09"/>
<dbReference type="GeneID" id="66913163"/>
<dbReference type="KEGG" id="xac:XAC4179"/>
<dbReference type="eggNOG" id="COG0365">
    <property type="taxonomic scope" value="Bacteria"/>
</dbReference>
<dbReference type="HOGENOM" id="CLU_000022_3_6_6"/>
<dbReference type="Proteomes" id="UP000000576">
    <property type="component" value="Chromosome"/>
</dbReference>
<dbReference type="GO" id="GO:0005829">
    <property type="term" value="C:cytosol"/>
    <property type="evidence" value="ECO:0007669"/>
    <property type="project" value="TreeGrafter"/>
</dbReference>
<dbReference type="GO" id="GO:0003987">
    <property type="term" value="F:acetate-CoA ligase activity"/>
    <property type="evidence" value="ECO:0007669"/>
    <property type="project" value="UniProtKB-UniRule"/>
</dbReference>
<dbReference type="GO" id="GO:0016208">
    <property type="term" value="F:AMP binding"/>
    <property type="evidence" value="ECO:0007669"/>
    <property type="project" value="InterPro"/>
</dbReference>
<dbReference type="GO" id="GO:0005524">
    <property type="term" value="F:ATP binding"/>
    <property type="evidence" value="ECO:0007669"/>
    <property type="project" value="UniProtKB-KW"/>
</dbReference>
<dbReference type="GO" id="GO:0046872">
    <property type="term" value="F:metal ion binding"/>
    <property type="evidence" value="ECO:0007669"/>
    <property type="project" value="UniProtKB-KW"/>
</dbReference>
<dbReference type="GO" id="GO:0019427">
    <property type="term" value="P:acetyl-CoA biosynthetic process from acetate"/>
    <property type="evidence" value="ECO:0007669"/>
    <property type="project" value="InterPro"/>
</dbReference>
<dbReference type="CDD" id="cd05966">
    <property type="entry name" value="ACS"/>
    <property type="match status" value="1"/>
</dbReference>
<dbReference type="FunFam" id="3.30.300.30:FF:000004">
    <property type="entry name" value="Acetyl-coenzyme A synthetase"/>
    <property type="match status" value="1"/>
</dbReference>
<dbReference type="FunFam" id="3.40.50.12780:FF:000001">
    <property type="entry name" value="Acetyl-coenzyme A synthetase"/>
    <property type="match status" value="1"/>
</dbReference>
<dbReference type="Gene3D" id="3.30.300.30">
    <property type="match status" value="1"/>
</dbReference>
<dbReference type="Gene3D" id="3.40.50.12780">
    <property type="entry name" value="N-terminal domain of ligase-like"/>
    <property type="match status" value="1"/>
</dbReference>
<dbReference type="HAMAP" id="MF_01123">
    <property type="entry name" value="Ac_CoA_synth"/>
    <property type="match status" value="1"/>
</dbReference>
<dbReference type="InterPro" id="IPR011904">
    <property type="entry name" value="Ac_CoA_lig"/>
</dbReference>
<dbReference type="InterPro" id="IPR032387">
    <property type="entry name" value="ACAS_N"/>
</dbReference>
<dbReference type="InterPro" id="IPR025110">
    <property type="entry name" value="AMP-bd_C"/>
</dbReference>
<dbReference type="InterPro" id="IPR045851">
    <property type="entry name" value="AMP-bd_C_sf"/>
</dbReference>
<dbReference type="InterPro" id="IPR020845">
    <property type="entry name" value="AMP-binding_CS"/>
</dbReference>
<dbReference type="InterPro" id="IPR000873">
    <property type="entry name" value="AMP-dep_synth/lig_dom"/>
</dbReference>
<dbReference type="InterPro" id="IPR042099">
    <property type="entry name" value="ANL_N_sf"/>
</dbReference>
<dbReference type="NCBIfam" id="TIGR02188">
    <property type="entry name" value="Ac_CoA_lig_AcsA"/>
    <property type="match status" value="1"/>
</dbReference>
<dbReference type="NCBIfam" id="NF001208">
    <property type="entry name" value="PRK00174.1"/>
    <property type="match status" value="1"/>
</dbReference>
<dbReference type="PANTHER" id="PTHR24095">
    <property type="entry name" value="ACETYL-COENZYME A SYNTHETASE"/>
    <property type="match status" value="1"/>
</dbReference>
<dbReference type="PANTHER" id="PTHR24095:SF14">
    <property type="entry name" value="ACETYL-COENZYME A SYNTHETASE 1"/>
    <property type="match status" value="1"/>
</dbReference>
<dbReference type="Pfam" id="PF16177">
    <property type="entry name" value="ACAS_N"/>
    <property type="match status" value="1"/>
</dbReference>
<dbReference type="Pfam" id="PF00501">
    <property type="entry name" value="AMP-binding"/>
    <property type="match status" value="1"/>
</dbReference>
<dbReference type="Pfam" id="PF13193">
    <property type="entry name" value="AMP-binding_C"/>
    <property type="match status" value="1"/>
</dbReference>
<dbReference type="SUPFAM" id="SSF56801">
    <property type="entry name" value="Acetyl-CoA synthetase-like"/>
    <property type="match status" value="1"/>
</dbReference>
<dbReference type="PROSITE" id="PS00455">
    <property type="entry name" value="AMP_BINDING"/>
    <property type="match status" value="1"/>
</dbReference>
<feature type="chain" id="PRO_0000208396" description="Acetyl-coenzyme A synthetase">
    <location>
        <begin position="1"/>
        <end position="647"/>
    </location>
</feature>
<feature type="binding site" evidence="1">
    <location>
        <begin position="190"/>
        <end position="193"/>
    </location>
    <ligand>
        <name>CoA</name>
        <dbReference type="ChEBI" id="CHEBI:57287"/>
    </ligand>
</feature>
<feature type="binding site" evidence="1">
    <location>
        <position position="310"/>
    </location>
    <ligand>
        <name>CoA</name>
        <dbReference type="ChEBI" id="CHEBI:57287"/>
    </ligand>
</feature>
<feature type="binding site" evidence="1">
    <location>
        <position position="334"/>
    </location>
    <ligand>
        <name>CoA</name>
        <dbReference type="ChEBI" id="CHEBI:57287"/>
    </ligand>
</feature>
<feature type="binding site" evidence="1">
    <location>
        <begin position="386"/>
        <end position="388"/>
    </location>
    <ligand>
        <name>ATP</name>
        <dbReference type="ChEBI" id="CHEBI:30616"/>
    </ligand>
</feature>
<feature type="binding site" evidence="1">
    <location>
        <begin position="410"/>
        <end position="415"/>
    </location>
    <ligand>
        <name>ATP</name>
        <dbReference type="ChEBI" id="CHEBI:30616"/>
    </ligand>
</feature>
<feature type="binding site" evidence="1">
    <location>
        <position position="499"/>
    </location>
    <ligand>
        <name>ATP</name>
        <dbReference type="ChEBI" id="CHEBI:30616"/>
    </ligand>
</feature>
<feature type="binding site" evidence="1">
    <location>
        <position position="514"/>
    </location>
    <ligand>
        <name>ATP</name>
        <dbReference type="ChEBI" id="CHEBI:30616"/>
    </ligand>
</feature>
<feature type="binding site" evidence="1">
    <location>
        <position position="522"/>
    </location>
    <ligand>
        <name>CoA</name>
        <dbReference type="ChEBI" id="CHEBI:57287"/>
    </ligand>
</feature>
<feature type="binding site" evidence="1">
    <location>
        <position position="525"/>
    </location>
    <ligand>
        <name>ATP</name>
        <dbReference type="ChEBI" id="CHEBI:30616"/>
    </ligand>
</feature>
<feature type="binding site" evidence="1">
    <location>
        <position position="536"/>
    </location>
    <ligand>
        <name>Mg(2+)</name>
        <dbReference type="ChEBI" id="CHEBI:18420"/>
    </ligand>
</feature>
<feature type="binding site" evidence="1">
    <location>
        <position position="538"/>
    </location>
    <ligand>
        <name>Mg(2+)</name>
        <dbReference type="ChEBI" id="CHEBI:18420"/>
    </ligand>
</feature>
<feature type="binding site" evidence="1">
    <location>
        <position position="541"/>
    </location>
    <ligand>
        <name>Mg(2+)</name>
        <dbReference type="ChEBI" id="CHEBI:18420"/>
    </ligand>
</feature>
<feature type="binding site" evidence="1">
    <location>
        <position position="583"/>
    </location>
    <ligand>
        <name>CoA</name>
        <dbReference type="ChEBI" id="CHEBI:57287"/>
    </ligand>
</feature>
<feature type="modified residue" description="N6-acetyllysine" evidence="1">
    <location>
        <position position="608"/>
    </location>
</feature>
<keyword id="KW-0007">Acetylation</keyword>
<keyword id="KW-0067">ATP-binding</keyword>
<keyword id="KW-0436">Ligase</keyword>
<keyword id="KW-0460">Magnesium</keyword>
<keyword id="KW-0479">Metal-binding</keyword>
<keyword id="KW-0547">Nucleotide-binding</keyword>
<proteinExistence type="inferred from homology"/>
<comment type="function">
    <text evidence="1">Catalyzes the conversion of acetate into acetyl-CoA (AcCoA), an essential intermediate at the junction of anabolic and catabolic pathways. AcsA undergoes a two-step reaction. In the first half reaction, AcsA combines acetate with ATP to form acetyl-adenylate (AcAMP) intermediate. In the second half reaction, it can then transfer the acetyl group from AcAMP to the sulfhydryl group of CoA, forming the product AcCoA.</text>
</comment>
<comment type="catalytic activity">
    <reaction evidence="1">
        <text>acetate + ATP + CoA = acetyl-CoA + AMP + diphosphate</text>
        <dbReference type="Rhea" id="RHEA:23176"/>
        <dbReference type="ChEBI" id="CHEBI:30089"/>
        <dbReference type="ChEBI" id="CHEBI:30616"/>
        <dbReference type="ChEBI" id="CHEBI:33019"/>
        <dbReference type="ChEBI" id="CHEBI:57287"/>
        <dbReference type="ChEBI" id="CHEBI:57288"/>
        <dbReference type="ChEBI" id="CHEBI:456215"/>
        <dbReference type="EC" id="6.2.1.1"/>
    </reaction>
</comment>
<comment type="cofactor">
    <cofactor evidence="1">
        <name>Mg(2+)</name>
        <dbReference type="ChEBI" id="CHEBI:18420"/>
    </cofactor>
</comment>
<comment type="PTM">
    <text evidence="1">Acetylated. Deacetylation by the SIR2-homolog deacetylase activates the enzyme.</text>
</comment>
<comment type="similarity">
    <text evidence="1">Belongs to the ATP-dependent AMP-binding enzyme family.</text>
</comment>
<reference key="1">
    <citation type="journal article" date="2002" name="Nature">
        <title>Comparison of the genomes of two Xanthomonas pathogens with differing host specificities.</title>
        <authorList>
            <person name="da Silva A.C.R."/>
            <person name="Ferro J.A."/>
            <person name="Reinach F.C."/>
            <person name="Farah C.S."/>
            <person name="Furlan L.R."/>
            <person name="Quaggio R.B."/>
            <person name="Monteiro-Vitorello C.B."/>
            <person name="Van Sluys M.A."/>
            <person name="Almeida N.F. Jr."/>
            <person name="Alves L.M.C."/>
            <person name="do Amaral A.M."/>
            <person name="Bertolini M.C."/>
            <person name="Camargo L.E.A."/>
            <person name="Camarotte G."/>
            <person name="Cannavan F."/>
            <person name="Cardozo J."/>
            <person name="Chambergo F."/>
            <person name="Ciapina L.P."/>
            <person name="Cicarelli R.M.B."/>
            <person name="Coutinho L.L."/>
            <person name="Cursino-Santos J.R."/>
            <person name="El-Dorry H."/>
            <person name="Faria J.B."/>
            <person name="Ferreira A.J.S."/>
            <person name="Ferreira R.C.C."/>
            <person name="Ferro M.I.T."/>
            <person name="Formighieri E.F."/>
            <person name="Franco M.C."/>
            <person name="Greggio C.C."/>
            <person name="Gruber A."/>
            <person name="Katsuyama A.M."/>
            <person name="Kishi L.T."/>
            <person name="Leite R.P."/>
            <person name="Lemos E.G.M."/>
            <person name="Lemos M.V.F."/>
            <person name="Locali E.C."/>
            <person name="Machado M.A."/>
            <person name="Madeira A.M.B.N."/>
            <person name="Martinez-Rossi N.M."/>
            <person name="Martins E.C."/>
            <person name="Meidanis J."/>
            <person name="Menck C.F.M."/>
            <person name="Miyaki C.Y."/>
            <person name="Moon D.H."/>
            <person name="Moreira L.M."/>
            <person name="Novo M.T.M."/>
            <person name="Okura V.K."/>
            <person name="Oliveira M.C."/>
            <person name="Oliveira V.R."/>
            <person name="Pereira H.A."/>
            <person name="Rossi A."/>
            <person name="Sena J.A.D."/>
            <person name="Silva C."/>
            <person name="de Souza R.F."/>
            <person name="Spinola L.A.F."/>
            <person name="Takita M.A."/>
            <person name="Tamura R.E."/>
            <person name="Teixeira E.C."/>
            <person name="Tezza R.I.D."/>
            <person name="Trindade dos Santos M."/>
            <person name="Truffi D."/>
            <person name="Tsai S.M."/>
            <person name="White F.F."/>
            <person name="Setubal J.C."/>
            <person name="Kitajima J.P."/>
        </authorList>
    </citation>
    <scope>NUCLEOTIDE SEQUENCE [LARGE SCALE GENOMIC DNA]</scope>
    <source>
        <strain>306</strain>
    </source>
</reference>